<evidence type="ECO:0000250" key="1"/>
<evidence type="ECO:0000250" key="2">
    <source>
        <dbReference type="UniProtKB" id="Q2VPU4"/>
    </source>
</evidence>
<evidence type="ECO:0000250" key="3">
    <source>
        <dbReference type="UniProtKB" id="Q8VIP2"/>
    </source>
</evidence>
<evidence type="ECO:0000250" key="4">
    <source>
        <dbReference type="UniProtKB" id="Q9HAP2"/>
    </source>
</evidence>
<evidence type="ECO:0000255" key="5">
    <source>
        <dbReference type="PROSITE-ProRule" id="PRU00981"/>
    </source>
</evidence>
<evidence type="ECO:0000256" key="6">
    <source>
        <dbReference type="SAM" id="MobiDB-lite"/>
    </source>
</evidence>
<evidence type="ECO:0000269" key="7">
    <source>
    </source>
</evidence>
<evidence type="ECO:0000269" key="8">
    <source>
    </source>
</evidence>
<evidence type="ECO:0000303" key="9">
    <source>
    </source>
</evidence>
<evidence type="ECO:0000303" key="10">
    <source>
    </source>
</evidence>
<evidence type="ECO:0000303" key="11">
    <source>
    </source>
</evidence>
<evidence type="ECO:0000305" key="12"/>
<evidence type="ECO:0007744" key="13">
    <source>
    </source>
</evidence>
<evidence type="ECO:0007744" key="14">
    <source>
    </source>
</evidence>
<evidence type="ECO:0007829" key="15">
    <source>
        <dbReference type="PDB" id="6YGJ"/>
    </source>
</evidence>
<name>MLXPL_HUMAN</name>
<keyword id="KW-0002">3D-structure</keyword>
<keyword id="KW-0025">Alternative splicing</keyword>
<keyword id="KW-0238">DNA-binding</keyword>
<keyword id="KW-0539">Nucleus</keyword>
<keyword id="KW-0597">Phosphoprotein</keyword>
<keyword id="KW-1267">Proteomics identification</keyword>
<keyword id="KW-1185">Reference proteome</keyword>
<keyword id="KW-0678">Repressor</keyword>
<keyword id="KW-0804">Transcription</keyword>
<keyword id="KW-0805">Transcription regulation</keyword>
<keyword id="KW-0856">Williams-Beuren syndrome</keyword>
<dbReference type="EMBL" id="AF156673">
    <property type="protein sequence ID" value="AAF68176.1"/>
    <property type="molecule type" value="Genomic_DNA"/>
</dbReference>
<dbReference type="EMBL" id="AF156603">
    <property type="protein sequence ID" value="AAF68174.1"/>
    <property type="molecule type" value="mRNA"/>
</dbReference>
<dbReference type="EMBL" id="AF245470">
    <property type="protein sequence ID" value="AAK20935.1"/>
    <property type="molecule type" value="mRNA"/>
</dbReference>
<dbReference type="EMBL" id="AF245471">
    <property type="protein sequence ID" value="AAK20936.1"/>
    <property type="molecule type" value="mRNA"/>
</dbReference>
<dbReference type="EMBL" id="AF245472">
    <property type="protein sequence ID" value="AAK20937.1"/>
    <property type="molecule type" value="mRNA"/>
</dbReference>
<dbReference type="EMBL" id="AF245473">
    <property type="protein sequence ID" value="AAK20938.1"/>
    <property type="molecule type" value="mRNA"/>
</dbReference>
<dbReference type="EMBL" id="AF245474">
    <property type="protein sequence ID" value="AAK20939.1"/>
    <property type="molecule type" value="mRNA"/>
</dbReference>
<dbReference type="EMBL" id="FJ515858">
    <property type="protein sequence ID" value="ACS13745.1"/>
    <property type="molecule type" value="Genomic_DNA"/>
</dbReference>
<dbReference type="EMBL" id="FJ515858">
    <property type="protein sequence ID" value="ACS13746.1"/>
    <property type="molecule type" value="Genomic_DNA"/>
</dbReference>
<dbReference type="EMBL" id="FJ515858">
    <property type="protein sequence ID" value="ACS13748.1"/>
    <property type="molecule type" value="Genomic_DNA"/>
</dbReference>
<dbReference type="EMBL" id="AF056184">
    <property type="protein sequence ID" value="AAD28084.1"/>
    <property type="molecule type" value="mRNA"/>
</dbReference>
<dbReference type="EMBL" id="CH471200">
    <property type="protein sequence ID" value="EAW69660.1"/>
    <property type="molecule type" value="Genomic_DNA"/>
</dbReference>
<dbReference type="EMBL" id="CH471200">
    <property type="protein sequence ID" value="EAW69661.1"/>
    <property type="molecule type" value="Genomic_DNA"/>
</dbReference>
<dbReference type="EMBL" id="CH471200">
    <property type="protein sequence ID" value="EAW69662.1"/>
    <property type="molecule type" value="Genomic_DNA"/>
</dbReference>
<dbReference type="EMBL" id="BC012925">
    <property type="protein sequence ID" value="AAH12925.1"/>
    <property type="molecule type" value="mRNA"/>
</dbReference>
<dbReference type="CCDS" id="CCDS47605.1">
    <molecule id="Q9NP71-2"/>
</dbReference>
<dbReference type="CCDS" id="CCDS47606.1">
    <molecule id="Q9NP71-3"/>
</dbReference>
<dbReference type="CCDS" id="CCDS5553.1">
    <molecule id="Q9NP71-1"/>
</dbReference>
<dbReference type="CCDS" id="CCDS5554.1">
    <molecule id="Q9NP71-4"/>
</dbReference>
<dbReference type="RefSeq" id="NP_116569.1">
    <molecule id="Q9NP71-1"/>
    <property type="nucleotide sequence ID" value="NM_032951.3"/>
</dbReference>
<dbReference type="RefSeq" id="NP_116570.1">
    <molecule id="Q9NP71-2"/>
    <property type="nucleotide sequence ID" value="NM_032952.3"/>
</dbReference>
<dbReference type="RefSeq" id="NP_116571.1">
    <molecule id="Q9NP71-3"/>
    <property type="nucleotide sequence ID" value="NM_032953.3"/>
</dbReference>
<dbReference type="RefSeq" id="NP_116572.1">
    <molecule id="Q9NP71-4"/>
    <property type="nucleotide sequence ID" value="NM_032954.3"/>
</dbReference>
<dbReference type="PDB" id="6MJL">
    <property type="method" value="X-ray"/>
    <property type="resolution" value="2.50 A"/>
    <property type="chains" value="A=168-176"/>
</dbReference>
<dbReference type="PDB" id="6YGJ">
    <property type="method" value="X-ray"/>
    <property type="resolution" value="2.07 A"/>
    <property type="chains" value="B/I=117-137"/>
</dbReference>
<dbReference type="PDB" id="8BTQ">
    <property type="method" value="X-ray"/>
    <property type="resolution" value="1.60 A"/>
    <property type="chains" value="B=117-135"/>
</dbReference>
<dbReference type="PDB" id="8BWE">
    <property type="method" value="X-ray"/>
    <property type="resolution" value="2.00 A"/>
    <property type="chains" value="B=117-134"/>
</dbReference>
<dbReference type="PDB" id="8BWH">
    <property type="method" value="X-ray"/>
    <property type="resolution" value="2.10 A"/>
    <property type="chains" value="B=117-134"/>
</dbReference>
<dbReference type="PDB" id="8C1Y">
    <property type="method" value="X-ray"/>
    <property type="resolution" value="1.80 A"/>
    <property type="chains" value="B=117-134"/>
</dbReference>
<dbReference type="PDBsum" id="6MJL"/>
<dbReference type="PDBsum" id="6YGJ"/>
<dbReference type="PDBsum" id="8BTQ"/>
<dbReference type="PDBsum" id="8BWE"/>
<dbReference type="PDBsum" id="8BWH"/>
<dbReference type="PDBsum" id="8C1Y"/>
<dbReference type="SMR" id="Q9NP71"/>
<dbReference type="BioGRID" id="119275">
    <property type="interactions" value="48"/>
</dbReference>
<dbReference type="ComplexPortal" id="CPX-2530">
    <property type="entry name" value="MLXIPL-MLX transcription factor complex"/>
</dbReference>
<dbReference type="FunCoup" id="Q9NP71">
    <property type="interactions" value="1564"/>
</dbReference>
<dbReference type="IntAct" id="Q9NP71">
    <property type="interactions" value="9"/>
</dbReference>
<dbReference type="STRING" id="9606.ENSP00000320886"/>
<dbReference type="GlyGen" id="Q9NP71">
    <property type="glycosylation" value="12 sites, 1 O-linked glycan (8 sites)"/>
</dbReference>
<dbReference type="iPTMnet" id="Q9NP71"/>
<dbReference type="PhosphoSitePlus" id="Q9NP71"/>
<dbReference type="BioMuta" id="MLXIPL"/>
<dbReference type="DMDM" id="20140871"/>
<dbReference type="jPOST" id="Q9NP71"/>
<dbReference type="MassIVE" id="Q9NP71"/>
<dbReference type="PaxDb" id="9606-ENSP00000320886"/>
<dbReference type="PeptideAtlas" id="Q9NP71"/>
<dbReference type="ProteomicsDB" id="81900">
    <molecule id="Q9NP71-1"/>
</dbReference>
<dbReference type="ProteomicsDB" id="81901">
    <molecule id="Q9NP71-2"/>
</dbReference>
<dbReference type="ProteomicsDB" id="81902">
    <molecule id="Q9NP71-3"/>
</dbReference>
<dbReference type="ProteomicsDB" id="81903">
    <molecule id="Q9NP71-4"/>
</dbReference>
<dbReference type="ProteomicsDB" id="81904">
    <molecule id="Q9NP71-5"/>
</dbReference>
<dbReference type="ProteomicsDB" id="81905">
    <molecule id="Q9NP71-6"/>
</dbReference>
<dbReference type="Pumba" id="Q9NP71"/>
<dbReference type="Antibodypedia" id="14346">
    <property type="antibodies" value="348 antibodies from 30 providers"/>
</dbReference>
<dbReference type="DNASU" id="51085"/>
<dbReference type="Ensembl" id="ENST00000313375.8">
    <molecule id="Q9NP71-1"/>
    <property type="protein sequence ID" value="ENSP00000320886.3"/>
    <property type="gene ID" value="ENSG00000009950.16"/>
</dbReference>
<dbReference type="Ensembl" id="ENST00000345114.9">
    <molecule id="Q9NP71-5"/>
    <property type="protein sequence ID" value="ENSP00000343767.5"/>
    <property type="gene ID" value="ENSG00000009950.16"/>
</dbReference>
<dbReference type="Ensembl" id="ENST00000354613.5">
    <molecule id="Q9NP71-4"/>
    <property type="protein sequence ID" value="ENSP00000346629.1"/>
    <property type="gene ID" value="ENSG00000009950.16"/>
</dbReference>
<dbReference type="Ensembl" id="ENST00000414749.6">
    <molecule id="Q9NP71-3"/>
    <property type="protein sequence ID" value="ENSP00000412330.2"/>
    <property type="gene ID" value="ENSG00000009950.16"/>
</dbReference>
<dbReference type="Ensembl" id="ENST00000429400.6">
    <molecule id="Q9NP71-2"/>
    <property type="protein sequence ID" value="ENSP00000406296.2"/>
    <property type="gene ID" value="ENSG00000009950.16"/>
</dbReference>
<dbReference type="GeneID" id="51085"/>
<dbReference type="KEGG" id="hsa:51085"/>
<dbReference type="MANE-Select" id="ENST00000313375.8">
    <property type="protein sequence ID" value="ENSP00000320886.3"/>
    <property type="RefSeq nucleotide sequence ID" value="NM_032951.3"/>
    <property type="RefSeq protein sequence ID" value="NP_116569.1"/>
</dbReference>
<dbReference type="UCSC" id="uc003tyk.1">
    <molecule id="Q9NP71-1"/>
    <property type="organism name" value="human"/>
</dbReference>
<dbReference type="AGR" id="HGNC:12744"/>
<dbReference type="CTD" id="51085"/>
<dbReference type="DisGeNET" id="51085"/>
<dbReference type="GeneCards" id="MLXIPL"/>
<dbReference type="HGNC" id="HGNC:12744">
    <property type="gene designation" value="MLXIPL"/>
</dbReference>
<dbReference type="HPA" id="ENSG00000009950">
    <property type="expression patterns" value="Tissue enriched (liver)"/>
</dbReference>
<dbReference type="MalaCards" id="MLXIPL"/>
<dbReference type="MIM" id="605678">
    <property type="type" value="gene"/>
</dbReference>
<dbReference type="neXtProt" id="NX_Q9NP71"/>
<dbReference type="OpenTargets" id="ENSG00000009950"/>
<dbReference type="PharmGKB" id="PA37353"/>
<dbReference type="VEuPathDB" id="HostDB:ENSG00000009950"/>
<dbReference type="eggNOG" id="KOG3582">
    <property type="taxonomic scope" value="Eukaryota"/>
</dbReference>
<dbReference type="GeneTree" id="ENSGT00940000159210"/>
<dbReference type="HOGENOM" id="CLU_007471_1_1_1"/>
<dbReference type="InParanoid" id="Q9NP71"/>
<dbReference type="OMA" id="WTSDRHN"/>
<dbReference type="OrthoDB" id="6022628at2759"/>
<dbReference type="PAN-GO" id="Q9NP71">
    <property type="GO annotations" value="4 GO annotations based on evolutionary models"/>
</dbReference>
<dbReference type="PhylomeDB" id="Q9NP71"/>
<dbReference type="TreeFam" id="TF324749"/>
<dbReference type="PathwayCommons" id="Q9NP71"/>
<dbReference type="Reactome" id="R-HSA-163358">
    <property type="pathway name" value="PKA-mediated phosphorylation of key metabolic factors"/>
</dbReference>
<dbReference type="Reactome" id="R-HSA-163680">
    <property type="pathway name" value="AMPK inhibits chREBP transcriptional activation activity"/>
</dbReference>
<dbReference type="Reactome" id="R-HSA-163765">
    <property type="pathway name" value="ChREBP activates metabolic gene expression"/>
</dbReference>
<dbReference type="Reactome" id="R-HSA-163767">
    <property type="pathway name" value="PP2A-mediated dephosphorylation of key metabolic factors"/>
</dbReference>
<dbReference type="SignaLink" id="Q9NP71"/>
<dbReference type="SIGNOR" id="Q9NP71"/>
<dbReference type="BioGRID-ORCS" id="51085">
    <property type="hits" value="10 hits in 1175 CRISPR screens"/>
</dbReference>
<dbReference type="ChiTaRS" id="MLXIPL">
    <property type="organism name" value="human"/>
</dbReference>
<dbReference type="GeneWiki" id="MLXIPL"/>
<dbReference type="GenomeRNAi" id="51085"/>
<dbReference type="Pharos" id="Q9NP71">
    <property type="development level" value="Tbio"/>
</dbReference>
<dbReference type="PRO" id="PR:Q9NP71"/>
<dbReference type="Proteomes" id="UP000005640">
    <property type="component" value="Chromosome 7"/>
</dbReference>
<dbReference type="RNAct" id="Q9NP71">
    <property type="molecule type" value="protein"/>
</dbReference>
<dbReference type="Bgee" id="ENSG00000009950">
    <property type="expression patterns" value="Expressed in right lobe of liver and 141 other cell types or tissues"/>
</dbReference>
<dbReference type="ExpressionAtlas" id="Q9NP71">
    <property type="expression patterns" value="baseline and differential"/>
</dbReference>
<dbReference type="GO" id="GO:0000785">
    <property type="term" value="C:chromatin"/>
    <property type="evidence" value="ECO:0000314"/>
    <property type="project" value="UniProt"/>
</dbReference>
<dbReference type="GO" id="GO:0005737">
    <property type="term" value="C:cytoplasm"/>
    <property type="evidence" value="ECO:0000250"/>
    <property type="project" value="BHF-UCL"/>
</dbReference>
<dbReference type="GO" id="GO:0005829">
    <property type="term" value="C:cytosol"/>
    <property type="evidence" value="ECO:0000314"/>
    <property type="project" value="HPA"/>
</dbReference>
<dbReference type="GO" id="GO:0005654">
    <property type="term" value="C:nucleoplasm"/>
    <property type="evidence" value="ECO:0000314"/>
    <property type="project" value="HPA"/>
</dbReference>
<dbReference type="GO" id="GO:0005634">
    <property type="term" value="C:nucleus"/>
    <property type="evidence" value="ECO:0000250"/>
    <property type="project" value="BHF-UCL"/>
</dbReference>
<dbReference type="GO" id="GO:0005667">
    <property type="term" value="C:transcription regulator complex"/>
    <property type="evidence" value="ECO:0000303"/>
    <property type="project" value="UniProtKB"/>
</dbReference>
<dbReference type="GO" id="GO:0035538">
    <property type="term" value="F:carbohydrate response element binding"/>
    <property type="evidence" value="ECO:0000304"/>
    <property type="project" value="BHF-UCL"/>
</dbReference>
<dbReference type="GO" id="GO:0003677">
    <property type="term" value="F:DNA binding"/>
    <property type="evidence" value="ECO:0000303"/>
    <property type="project" value="BHF-UCL"/>
</dbReference>
<dbReference type="GO" id="GO:0001216">
    <property type="term" value="F:DNA-binding transcription activator activity"/>
    <property type="evidence" value="ECO:0000314"/>
    <property type="project" value="UniProt"/>
</dbReference>
<dbReference type="GO" id="GO:0001228">
    <property type="term" value="F:DNA-binding transcription activator activity, RNA polymerase II-specific"/>
    <property type="evidence" value="ECO:0007669"/>
    <property type="project" value="Ensembl"/>
</dbReference>
<dbReference type="GO" id="GO:0003700">
    <property type="term" value="F:DNA-binding transcription factor activity"/>
    <property type="evidence" value="ECO:0000303"/>
    <property type="project" value="BHF-UCL"/>
</dbReference>
<dbReference type="GO" id="GO:0000981">
    <property type="term" value="F:DNA-binding transcription factor activity, RNA polymerase II-specific"/>
    <property type="evidence" value="ECO:0000247"/>
    <property type="project" value="NTNU_SB"/>
</dbReference>
<dbReference type="GO" id="GO:0140297">
    <property type="term" value="F:DNA-binding transcription factor binding"/>
    <property type="evidence" value="ECO:0000314"/>
    <property type="project" value="UniProt"/>
</dbReference>
<dbReference type="GO" id="GO:0001227">
    <property type="term" value="F:DNA-binding transcription repressor activity, RNA polymerase II-specific"/>
    <property type="evidence" value="ECO:0007669"/>
    <property type="project" value="Ensembl"/>
</dbReference>
<dbReference type="GO" id="GO:0046982">
    <property type="term" value="F:protein heterodimerization activity"/>
    <property type="evidence" value="ECO:0000353"/>
    <property type="project" value="BHF-UCL"/>
</dbReference>
<dbReference type="GO" id="GO:0000978">
    <property type="term" value="F:RNA polymerase II cis-regulatory region sequence-specific DNA binding"/>
    <property type="evidence" value="ECO:0000318"/>
    <property type="project" value="GO_Central"/>
</dbReference>
<dbReference type="GO" id="GO:0061629">
    <property type="term" value="F:RNA polymerase II-specific DNA-binding transcription factor binding"/>
    <property type="evidence" value="ECO:0000353"/>
    <property type="project" value="BHF-UCL"/>
</dbReference>
<dbReference type="GO" id="GO:0009653">
    <property type="term" value="P:anatomical structure morphogenesis"/>
    <property type="evidence" value="ECO:0000304"/>
    <property type="project" value="ProtInc"/>
</dbReference>
<dbReference type="GO" id="GO:0097009">
    <property type="term" value="P:energy homeostasis"/>
    <property type="evidence" value="ECO:0000250"/>
    <property type="project" value="UniProtKB"/>
</dbReference>
<dbReference type="GO" id="GO:0055089">
    <property type="term" value="P:fatty acid homeostasis"/>
    <property type="evidence" value="ECO:0000250"/>
    <property type="project" value="UniProtKB"/>
</dbReference>
<dbReference type="GO" id="GO:0042593">
    <property type="term" value="P:glucose homeostasis"/>
    <property type="evidence" value="ECO:0000250"/>
    <property type="project" value="BHF-UCL"/>
</dbReference>
<dbReference type="GO" id="GO:0010255">
    <property type="term" value="P:glucose mediated signaling pathway"/>
    <property type="evidence" value="ECO:0000250"/>
    <property type="project" value="BHF-UCL"/>
</dbReference>
<dbReference type="GO" id="GO:0008610">
    <property type="term" value="P:lipid biosynthetic process"/>
    <property type="evidence" value="ECO:0000314"/>
    <property type="project" value="UniProt"/>
</dbReference>
<dbReference type="GO" id="GO:0045892">
    <property type="term" value="P:negative regulation of DNA-templated transcription"/>
    <property type="evidence" value="ECO:0000250"/>
    <property type="project" value="BHF-UCL"/>
</dbReference>
<dbReference type="GO" id="GO:0090324">
    <property type="term" value="P:negative regulation of oxidative phosphorylation"/>
    <property type="evidence" value="ECO:0000315"/>
    <property type="project" value="BHF-UCL"/>
</dbReference>
<dbReference type="GO" id="GO:1901797">
    <property type="term" value="P:negative regulation of signal transduction by p53 class mediator"/>
    <property type="evidence" value="ECO:0000315"/>
    <property type="project" value="BHF-UCL"/>
</dbReference>
<dbReference type="GO" id="GO:0008284">
    <property type="term" value="P:positive regulation of cell population proliferation"/>
    <property type="evidence" value="ECO:0000315"/>
    <property type="project" value="BHF-UCL"/>
</dbReference>
<dbReference type="GO" id="GO:0045893">
    <property type="term" value="P:positive regulation of DNA-templated transcription"/>
    <property type="evidence" value="ECO:0000250"/>
    <property type="project" value="BHF-UCL"/>
</dbReference>
<dbReference type="GO" id="GO:0045723">
    <property type="term" value="P:positive regulation of fatty acid biosynthetic process"/>
    <property type="evidence" value="ECO:0000250"/>
    <property type="project" value="BHF-UCL"/>
</dbReference>
<dbReference type="GO" id="GO:0045821">
    <property type="term" value="P:positive regulation of glycolytic process"/>
    <property type="evidence" value="ECO:0000315"/>
    <property type="project" value="BHF-UCL"/>
</dbReference>
<dbReference type="GO" id="GO:0035774">
    <property type="term" value="P:positive regulation of insulin secretion involved in cellular response to glucose stimulus"/>
    <property type="evidence" value="ECO:0007669"/>
    <property type="project" value="Ensembl"/>
</dbReference>
<dbReference type="GO" id="GO:0046889">
    <property type="term" value="P:positive regulation of lipid biosynthetic process"/>
    <property type="evidence" value="ECO:0000315"/>
    <property type="project" value="BHF-UCL"/>
</dbReference>
<dbReference type="GO" id="GO:0045944">
    <property type="term" value="P:positive regulation of transcription by RNA polymerase II"/>
    <property type="evidence" value="ECO:0000250"/>
    <property type="project" value="BHF-UCL"/>
</dbReference>
<dbReference type="GO" id="GO:0000432">
    <property type="term" value="P:positive regulation of transcription from RNA polymerase II promoter by glucose"/>
    <property type="evidence" value="ECO:0007669"/>
    <property type="project" value="Ensembl"/>
</dbReference>
<dbReference type="GO" id="GO:0006355">
    <property type="term" value="P:regulation of DNA-templated transcription"/>
    <property type="evidence" value="ECO:0000303"/>
    <property type="project" value="BHF-UCL"/>
</dbReference>
<dbReference type="GO" id="GO:0006357">
    <property type="term" value="P:regulation of transcription by RNA polymerase II"/>
    <property type="evidence" value="ECO:0000318"/>
    <property type="project" value="GO_Central"/>
</dbReference>
<dbReference type="GO" id="GO:0070328">
    <property type="term" value="P:triglyceride homeostasis"/>
    <property type="evidence" value="ECO:0000303"/>
    <property type="project" value="BHF-UCL"/>
</dbReference>
<dbReference type="CDD" id="cd19689">
    <property type="entry name" value="bHLHzip_MLXIPL"/>
    <property type="match status" value="1"/>
</dbReference>
<dbReference type="CDD" id="cd21771">
    <property type="entry name" value="NES2-NLS_ChREBP"/>
    <property type="match status" value="1"/>
</dbReference>
<dbReference type="FunFam" id="4.10.280.10:FF:000028">
    <property type="entry name" value="MLX interacting protein like"/>
    <property type="match status" value="1"/>
</dbReference>
<dbReference type="Gene3D" id="4.10.280.10">
    <property type="entry name" value="Helix-loop-helix DNA-binding domain"/>
    <property type="match status" value="1"/>
</dbReference>
<dbReference type="InterPro" id="IPR011598">
    <property type="entry name" value="bHLH_dom"/>
</dbReference>
<dbReference type="InterPro" id="IPR036638">
    <property type="entry name" value="HLH_DNA-bd_sf"/>
</dbReference>
<dbReference type="InterPro" id="IPR052207">
    <property type="entry name" value="Max-like/E-box_TFs"/>
</dbReference>
<dbReference type="PANTHER" id="PTHR15741">
    <property type="entry name" value="BASIC HELIX-LOOP-HELIX ZIP TRANSCRIPTION FACTOR"/>
    <property type="match status" value="1"/>
</dbReference>
<dbReference type="PANTHER" id="PTHR15741:SF14">
    <property type="entry name" value="CARBOHYDRATE-RESPONSIVE ELEMENT-BINDING PROTEIN"/>
    <property type="match status" value="1"/>
</dbReference>
<dbReference type="Pfam" id="PF00010">
    <property type="entry name" value="HLH"/>
    <property type="match status" value="1"/>
</dbReference>
<dbReference type="SMART" id="SM00353">
    <property type="entry name" value="HLH"/>
    <property type="match status" value="1"/>
</dbReference>
<dbReference type="SUPFAM" id="SSF47459">
    <property type="entry name" value="HLH, helix-loop-helix DNA-binding domain"/>
    <property type="match status" value="1"/>
</dbReference>
<dbReference type="PROSITE" id="PS50888">
    <property type="entry name" value="BHLH"/>
    <property type="match status" value="1"/>
</dbReference>
<feature type="chain" id="PRO_0000127504" description="Carbohydrate-responsive element-binding protein">
    <location>
        <begin position="1"/>
        <end position="852"/>
    </location>
</feature>
<feature type="domain" description="bHLH" evidence="5">
    <location>
        <begin position="649"/>
        <end position="703"/>
    </location>
</feature>
<feature type="region of interest" description="Disordered" evidence="6">
    <location>
        <begin position="1"/>
        <end position="36"/>
    </location>
</feature>
<feature type="region of interest" description="Disordered" evidence="6">
    <location>
        <begin position="54"/>
        <end position="80"/>
    </location>
</feature>
<feature type="region of interest" description="Disordered" evidence="6">
    <location>
        <begin position="328"/>
        <end position="365"/>
    </location>
</feature>
<feature type="region of interest" description="Disordered" evidence="6">
    <location>
        <begin position="486"/>
        <end position="527"/>
    </location>
</feature>
<feature type="region of interest" description="Disordered" evidence="6">
    <location>
        <begin position="548"/>
        <end position="648"/>
    </location>
</feature>
<feature type="region of interest" description="Leucine-zipper">
    <location>
        <begin position="703"/>
        <end position="724"/>
    </location>
</feature>
<feature type="compositionally biased region" description="Low complexity" evidence="6">
    <location>
        <begin position="1"/>
        <end position="12"/>
    </location>
</feature>
<feature type="compositionally biased region" description="Low complexity" evidence="6">
    <location>
        <begin position="505"/>
        <end position="521"/>
    </location>
</feature>
<feature type="compositionally biased region" description="Polar residues" evidence="6">
    <location>
        <begin position="548"/>
        <end position="559"/>
    </location>
</feature>
<feature type="compositionally biased region" description="Pro residues" evidence="6">
    <location>
        <begin position="568"/>
        <end position="584"/>
    </location>
</feature>
<feature type="modified residue" description="Phosphoserine" evidence="14">
    <location>
        <position position="20"/>
    </location>
</feature>
<feature type="modified residue" description="Phosphoserine" evidence="14">
    <location>
        <position position="23"/>
    </location>
</feature>
<feature type="modified residue" description="Phosphoserine" evidence="14">
    <location>
        <position position="25"/>
    </location>
</feature>
<feature type="modified residue" description="Phosphothreonine" evidence="14">
    <location>
        <position position="27"/>
    </location>
</feature>
<feature type="modified residue" description="Phosphoserine" evidence="14">
    <location>
        <position position="29"/>
    </location>
</feature>
<feature type="modified residue" description="Phosphoserine" evidence="13">
    <location>
        <position position="196"/>
    </location>
</feature>
<feature type="modified residue" description="Phosphoserine; by AMPK" evidence="3">
    <location>
        <position position="556"/>
    </location>
</feature>
<feature type="modified residue" description="Phosphoserine" evidence="13 14">
    <location>
        <position position="602"/>
    </location>
</feature>
<feature type="modified residue" description="Phosphoserine" evidence="13">
    <location>
        <position position="614"/>
    </location>
</feature>
<feature type="modified residue" description="Phosphoserine" evidence="14">
    <location>
        <position position="631"/>
    </location>
</feature>
<feature type="splice variant" id="VSP_002167" description="In isoform 6." evidence="10">
    <location>
        <begin position="176"/>
        <end position="268"/>
    </location>
</feature>
<feature type="splice variant" id="VSP_002168" description="In isoform 5." evidence="9">
    <original>QETVPEFPCTFLPPTPAP</original>
    <variation>AVNGGCQGTSAPCQALGL</variation>
    <location>
        <begin position="558"/>
        <end position="575"/>
    </location>
</feature>
<feature type="splice variant" id="VSP_002169" description="In isoform 5." evidence="9">
    <location>
        <begin position="576"/>
        <end position="852"/>
    </location>
</feature>
<feature type="splice variant" id="VSP_002170" description="In isoform 3 and isoform 4." evidence="9 11">
    <location>
        <begin position="647"/>
        <end position="648"/>
    </location>
</feature>
<feature type="splice variant" id="VSP_002171" description="In isoform 2 and isoform 4." evidence="9 11">
    <location>
        <begin position="687"/>
        <end position="705"/>
    </location>
</feature>
<feature type="splice variant" id="VSP_002172" description="In isoform 6." evidence="10">
    <original>TV</original>
    <variation>ST</variation>
    <location>
        <begin position="814"/>
        <end position="815"/>
    </location>
</feature>
<feature type="splice variant" id="VSP_002173" description="In isoform 6." evidence="10">
    <location>
        <begin position="816"/>
        <end position="852"/>
    </location>
</feature>
<feature type="sequence variant" id="VAR_049556" description="In dbSNP:rs3812316.">
    <original>Q</original>
    <variation>H</variation>
    <location>
        <position position="241"/>
    </location>
</feature>
<feature type="sequence variant" id="VAR_049557" description="In dbSNP:rs34922362.">
    <original>D</original>
    <variation>E</variation>
    <location>
        <position position="244"/>
    </location>
</feature>
<feature type="sequence conflict" description="In Ref. 6; AAH12925." evidence="12" ref="6">
    <location>
        <position position="558"/>
    </location>
</feature>
<feature type="helix" evidence="15">
    <location>
        <begin position="120"/>
        <end position="134"/>
    </location>
</feature>
<proteinExistence type="evidence at protein level"/>
<comment type="function">
    <text evidence="2 4">Binds DNA as a heterodimer with MLX/TCFL4 and activates transcription. Binds to the canonical E box sequence 5'-CACGTG-3'. Plays a role in transcriptional activation of glycolytic target genes. Involved in glucose-responsive gene regulation (By similarity). Regulates transcription in response to changes in cellular carbohydrate abundance such as occurs during fasting to feeding metabolic transition. Refeeding stimulates MLXIPL/ChREBP transcription factor, leading to increased BCKDK to PPM1K expression ratio, phosphorylation and activation of ACLY that ultimately results in the generation of malonyl-CoA and oxaloacetate immediate substrates of de novo lipogenesis and gluconeogenesis, respectively (By similarity).</text>
</comment>
<comment type="subunit">
    <text evidence="8">Binds DNA as a heterodimer with MLX/TCFL4.</text>
</comment>
<comment type="subcellular location">
    <subcellularLocation>
        <location>Nucleus</location>
    </subcellularLocation>
</comment>
<comment type="alternative products">
    <event type="alternative splicing"/>
    <isoform>
        <id>Q9NP71-1</id>
        <name>1</name>
        <name>Alpha</name>
        <sequence type="displayed"/>
    </isoform>
    <isoform>
        <id>Q9NP71-2</id>
        <name>2</name>
        <name>Beta</name>
        <sequence type="described" ref="VSP_002171"/>
    </isoform>
    <isoform>
        <id>Q9NP71-3</id>
        <name>3</name>
        <name>Gamma</name>
        <sequence type="described" ref="VSP_002170"/>
    </isoform>
    <isoform>
        <id>Q9NP71-4</id>
        <name>4</name>
        <name>Delta</name>
        <sequence type="described" ref="VSP_002170 VSP_002171"/>
    </isoform>
    <isoform>
        <id>Q9NP71-5</id>
        <name>5</name>
        <name>Epsilon</name>
        <sequence type="described" ref="VSP_002168 VSP_002169"/>
    </isoform>
    <isoform>
        <id>Q9NP71-6</id>
        <name>6</name>
        <sequence type="described" ref="VSP_002167 VSP_002172 VSP_002173"/>
    </isoform>
</comment>
<comment type="tissue specificity">
    <text>Expressed in liver, heart, kidney, cerebellum and intestinal tissues.</text>
</comment>
<comment type="PTM">
    <text evidence="1">Phosphorylation at Ser-556 by AMPK inactivates the DNA-binding activity.</text>
</comment>
<comment type="disease">
    <text evidence="7">WBSCR14 is located in the Williams-Beuren syndrome (WBS) critical region. WBS results from a hemizygous deletion of several genes on chromosome 7q11.23, thought to arise as a consequence of unequal crossing over between highly homologous low-copy repeat sequences flanking the deleted region. Haploinsufficiency of WBSCR14 may be the cause of certain cardiovascular and musculo-skeletal abnormalities observed in the disease.</text>
</comment>
<comment type="miscellaneous">
    <molecule>Isoform 5</molecule>
    <text evidence="12">May be produced at very low levels due to a premature stop codon in the mRNA, leading to nonsense-mediated mRNA decay.</text>
</comment>
<gene>
    <name type="primary">MLXIPL</name>
    <name type="synonym">BHLHD14</name>
    <name type="synonym">MIO</name>
    <name type="synonym">WBSCR14</name>
</gene>
<accession>Q9NP71</accession>
<accession>C5HU02</accession>
<accession>C5HU03</accession>
<accession>C5HU04</accession>
<accession>Q96E48</accession>
<accession>Q9BY03</accession>
<accession>Q9BY04</accession>
<accession>Q9BY05</accession>
<accession>Q9BY06</accession>
<accession>Q9Y2P3</accession>
<protein>
    <recommendedName>
        <fullName>Carbohydrate-responsive element-binding protein</fullName>
        <shortName>ChREBP</shortName>
    </recommendedName>
    <alternativeName>
        <fullName>Class D basic helix-loop-helix protein 14</fullName>
        <shortName>bHLHd14</shortName>
    </alternativeName>
    <alternativeName>
        <fullName>MLX interactor</fullName>
    </alternativeName>
    <alternativeName>
        <fullName>MLX-interacting protein-like</fullName>
    </alternativeName>
    <alternativeName>
        <fullName>WS basic-helix-loop-helix leucine zipper protein</fullName>
        <shortName>WS-bHLH</shortName>
    </alternativeName>
    <alternativeName>
        <fullName>Williams-Beuren syndrome chromosomal region 14 protein</fullName>
    </alternativeName>
</protein>
<sequence>MAGALAGLAAGLQVPRVAPSPDSDSDTDSEDPSLRRSAGGLLRSQVIHSGHFMVSSPHSDSLPRRRDQEGSVGPSDFGPRSIDPTLTRLFECLSLAYSGKLVSPKWKNFKGLKLLCRDKIRLNNAIWRAWYIQYVKRRKSPVCGFVTPLQGPEADAHRKPEAVVLEGNYWKRRIEVVMREYHKWRIYYKKRLRKPSREDDLLAPKQAEGRWPPPEQWCKQLFSSVVPVLLGDPEEEPGGRQLLDLNCFLSDISDTLFTMTQSGPSPLQLPPEDAYVGNADMIQPDLTPLQPSLDDFMDISDFFTNSRLPQPPMPSNFPEPPSFSPVVDSLFSSGTLGPEVPPASSAMTHLSGHSRLQARNSCPGPLDSSAFLSSDFLLPEDPKPRLPPPPVPPPLLHYPPPAKVPGLEPCPPPPFPPMAPPTALLQEEPLFSPRFPFPTVPPAPGVSPLPAPAAFPPTPQSVPSPAPTPFPIELLPLGYSEPAFGPCFSMPRGKPPAPSPRGQKASPPTLAPATASPPTTAGSNNPCLTQLLTAAKPEQALEPPLVSSTLLRSPGSPQETVPEFPCTFLPPTPAPTPPRPPPGPATLAPSRPLLVPKAERLSPPAPSGSERRLSGDLSSMPGPGTLSVRVSPPQPILSRGRPDSNKTENRRITHISAEQKRRFNIKLGFDTLHGLVSTLSAQPSLKVSKATTLQKTAEYILMLQQERAGLQEEAQQLRDEIEELNAAINLCQQQLPATGVPITHQRFDQMRDMFDDYVRTRTLHNWKFWVFSILIRPLFESFNGMVSTASVHTLRQTSLAWLDQYCSLPALRPTVLNSLRQLGTSTSILTDPGRIPEQATRAVTEGTLGKPL</sequence>
<organism>
    <name type="scientific">Homo sapiens</name>
    <name type="common">Human</name>
    <dbReference type="NCBI Taxonomy" id="9606"/>
    <lineage>
        <taxon>Eukaryota</taxon>
        <taxon>Metazoa</taxon>
        <taxon>Chordata</taxon>
        <taxon>Craniata</taxon>
        <taxon>Vertebrata</taxon>
        <taxon>Euteleostomi</taxon>
        <taxon>Mammalia</taxon>
        <taxon>Eutheria</taxon>
        <taxon>Euarchontoglires</taxon>
        <taxon>Primates</taxon>
        <taxon>Haplorrhini</taxon>
        <taxon>Catarrhini</taxon>
        <taxon>Hominidae</taxon>
        <taxon>Homo</taxon>
    </lineage>
</organism>
<reference key="1">
    <citation type="journal article" date="2000" name="Eur. J. Hum. Genet.">
        <title>WBSCR14, a putative transcription factor gene deleted in Williams-Beuren syndrome: complete characterisation of the human gene and the mouse ortholog.</title>
        <authorList>
            <person name="de Luis O."/>
            <person name="Valero M.C."/>
            <person name="Perez Jurado L.A."/>
        </authorList>
    </citation>
    <scope>NUCLEOTIDE SEQUENCE (ISOFORM 1)</scope>
    <scope>INVOLVEMENT IN WBS</scope>
</reference>
<reference key="2">
    <citation type="journal article" date="2001" name="Hum. Mol. Genet.">
        <title>WBSCR14, a gene mapping to the Williams-Beuren syndrome deleted region, is a new member of the Mlx transcription factor network.</title>
        <authorList>
            <person name="Cairo S."/>
            <person name="Merla G."/>
            <person name="Urbinati F."/>
            <person name="Ballabio A."/>
            <person name="Reymond A."/>
        </authorList>
    </citation>
    <scope>NUCLEOTIDE SEQUENCE [MRNA] (ISOFORMS 1; 2; 3; 4 AND 5)</scope>
    <scope>SUBUNIT</scope>
</reference>
<reference key="3">
    <citation type="submission" date="2008-12" db="EMBL/GenBank/DDBJ databases">
        <authorList>
            <consortium name="NHLBI resequencing and genotyping service (RS&amp;G)"/>
        </authorList>
    </citation>
    <scope>NUCLEOTIDE SEQUENCE [GENOMIC DNA]</scope>
</reference>
<reference key="4">
    <citation type="submission" date="2005-09" db="EMBL/GenBank/DDBJ databases">
        <authorList>
            <person name="Mural R.J."/>
            <person name="Istrail S."/>
            <person name="Sutton G.G."/>
            <person name="Florea L."/>
            <person name="Halpern A.L."/>
            <person name="Mobarry C.M."/>
            <person name="Lippert R."/>
            <person name="Walenz B."/>
            <person name="Shatkay H."/>
            <person name="Dew I."/>
            <person name="Miller J.R."/>
            <person name="Flanigan M.J."/>
            <person name="Edwards N.J."/>
            <person name="Bolanos R."/>
            <person name="Fasulo D."/>
            <person name="Halldorsson B.V."/>
            <person name="Hannenhalli S."/>
            <person name="Turner R."/>
            <person name="Yooseph S."/>
            <person name="Lu F."/>
            <person name="Nusskern D.R."/>
            <person name="Shue B.C."/>
            <person name="Zheng X.H."/>
            <person name="Zhong F."/>
            <person name="Delcher A.L."/>
            <person name="Huson D.H."/>
            <person name="Kravitz S.A."/>
            <person name="Mouchard L."/>
            <person name="Reinert K."/>
            <person name="Remington K.A."/>
            <person name="Clark A.G."/>
            <person name="Waterman M.S."/>
            <person name="Eichler E.E."/>
            <person name="Adams M.D."/>
            <person name="Hunkapiller M.W."/>
            <person name="Myers E.W."/>
            <person name="Venter J.C."/>
        </authorList>
    </citation>
    <scope>NUCLEOTIDE SEQUENCE [LARGE SCALE GENOMIC DNA]</scope>
</reference>
<reference key="5">
    <citation type="journal article" date="1998" name="Hum. Genet.">
        <title>Complete physical map of the common deletion region in Williams syndrome and identification and characterization of three novel genes.</title>
        <authorList>
            <person name="Meng X."/>
            <person name="Lu X."/>
            <person name="Li Z."/>
            <person name="Green E.D."/>
            <person name="Massa H."/>
            <person name="Trask B.J."/>
            <person name="Morris C.A."/>
            <person name="Keating M.T."/>
        </authorList>
    </citation>
    <scope>NUCLEOTIDE SEQUENCE [MRNA] OF 620-852 (ISOFORM 4)</scope>
</reference>
<reference key="6">
    <citation type="journal article" date="2004" name="Genome Res.">
        <title>The status, quality, and expansion of the NIH full-length cDNA project: the Mammalian Gene Collection (MGC).</title>
        <authorList>
            <consortium name="The MGC Project Team"/>
        </authorList>
    </citation>
    <scope>NUCLEOTIDE SEQUENCE [LARGE SCALE MRNA] (ISOFORM 6)</scope>
    <source>
        <tissue>Eye</tissue>
    </source>
</reference>
<reference key="7">
    <citation type="journal article" date="2004" name="Genome Biol.">
        <title>An unappreciated role for RNA surveillance.</title>
        <authorList>
            <person name="Hillman R.T."/>
            <person name="Green R.E."/>
            <person name="Brenner S.E."/>
        </authorList>
    </citation>
    <scope>SPLICE ISOFORM(S) THAT ARE POTENTIAL NMD TARGET(S)</scope>
</reference>
<reference key="8">
    <citation type="journal article" date="2013" name="J. Proteome Res.">
        <title>Toward a comprehensive characterization of a human cancer cell phosphoproteome.</title>
        <authorList>
            <person name="Zhou H."/>
            <person name="Di Palma S."/>
            <person name="Preisinger C."/>
            <person name="Peng M."/>
            <person name="Polat A.N."/>
            <person name="Heck A.J."/>
            <person name="Mohammed S."/>
        </authorList>
    </citation>
    <scope>PHOSPHORYLATION [LARGE SCALE ANALYSIS] AT SER-196; SER-602 AND SER-614</scope>
    <scope>IDENTIFICATION BY MASS SPECTROMETRY [LARGE SCALE ANALYSIS]</scope>
    <source>
        <tissue>Cervix carcinoma</tissue>
        <tissue>Erythroleukemia</tissue>
    </source>
</reference>
<reference key="9">
    <citation type="journal article" date="2014" name="J. Proteomics">
        <title>An enzyme assisted RP-RPLC approach for in-depth analysis of human liver phosphoproteome.</title>
        <authorList>
            <person name="Bian Y."/>
            <person name="Song C."/>
            <person name="Cheng K."/>
            <person name="Dong M."/>
            <person name="Wang F."/>
            <person name="Huang J."/>
            <person name="Sun D."/>
            <person name="Wang L."/>
            <person name="Ye M."/>
            <person name="Zou H."/>
        </authorList>
    </citation>
    <scope>PHOSPHORYLATION [LARGE SCALE ANALYSIS] AT SER-20; SER-23; SER-25; THR-27; SER-29; SER-602 AND SER-631</scope>
    <scope>IDENTIFICATION BY MASS SPECTROMETRY [LARGE SCALE ANALYSIS]</scope>
    <source>
        <tissue>Liver</tissue>
    </source>
</reference>